<gene>
    <name evidence="1" type="primary">fmt</name>
    <name type="ordered locus">AB57_3912</name>
</gene>
<reference key="1">
    <citation type="journal article" date="2008" name="J. Bacteriol.">
        <title>Comparative genome sequence analysis of multidrug-resistant Acinetobacter baumannii.</title>
        <authorList>
            <person name="Adams M.D."/>
            <person name="Goglin K."/>
            <person name="Molyneaux N."/>
            <person name="Hujer K.M."/>
            <person name="Lavender H."/>
            <person name="Jamison J.J."/>
            <person name="MacDonald I.J."/>
            <person name="Martin K.M."/>
            <person name="Russo T."/>
            <person name="Campagnari A.A."/>
            <person name="Hujer A.M."/>
            <person name="Bonomo R.A."/>
            <person name="Gill S.R."/>
        </authorList>
    </citation>
    <scope>NUCLEOTIDE SEQUENCE [LARGE SCALE GENOMIC DNA]</scope>
    <source>
        <strain>AB0057</strain>
    </source>
</reference>
<feature type="chain" id="PRO_1000118467" description="Methionyl-tRNA formyltransferase">
    <location>
        <begin position="1"/>
        <end position="320"/>
    </location>
</feature>
<feature type="binding site" evidence="1">
    <location>
        <begin position="114"/>
        <end position="117"/>
    </location>
    <ligand>
        <name>(6S)-5,6,7,8-tetrahydrofolate</name>
        <dbReference type="ChEBI" id="CHEBI:57453"/>
    </ligand>
</feature>
<sequence>MKIIFAGTPEFAATALAALLKTSHEIIAVYTQPDRKAGRGQKLTPSPVKQLALEHNIPVYQPLHFKASTEEGLAAQQELAALGADVMVVAAYGLILPQAVLDTPKYGCLNIHGSLLPRWRGAAPIQRAIATGDDETGITIMQMAAGLDTGDMMYKTYCPIASEDTSATLHDKLAAQGATAICAVLESEETLQKYLAEREVQDESLTVYAHKLVKSEARIDWSMNAVQVDRNIRAFNPWPVAFIQLDENNALRVWNSIISSQSKVNAQAGEIIAIDKQGVHVACGENTFICLTSVQWPGGKALNAQQIAQTQKLHVGQILP</sequence>
<protein>
    <recommendedName>
        <fullName evidence="1">Methionyl-tRNA formyltransferase</fullName>
        <ecNumber evidence="1">2.1.2.9</ecNumber>
    </recommendedName>
</protein>
<dbReference type="EC" id="2.1.2.9" evidence="1"/>
<dbReference type="EMBL" id="CP001182">
    <property type="protein sequence ID" value="ACJ42840.1"/>
    <property type="molecule type" value="Genomic_DNA"/>
</dbReference>
<dbReference type="RefSeq" id="WP_000691189.1">
    <property type="nucleotide sequence ID" value="NC_011586.2"/>
</dbReference>
<dbReference type="SMR" id="B7I2C3"/>
<dbReference type="KEGG" id="abn:AB57_3912"/>
<dbReference type="HOGENOM" id="CLU_033347_1_2_6"/>
<dbReference type="Proteomes" id="UP000007094">
    <property type="component" value="Chromosome"/>
</dbReference>
<dbReference type="GO" id="GO:0005829">
    <property type="term" value="C:cytosol"/>
    <property type="evidence" value="ECO:0007669"/>
    <property type="project" value="TreeGrafter"/>
</dbReference>
<dbReference type="GO" id="GO:0004479">
    <property type="term" value="F:methionyl-tRNA formyltransferase activity"/>
    <property type="evidence" value="ECO:0007669"/>
    <property type="project" value="UniProtKB-UniRule"/>
</dbReference>
<dbReference type="CDD" id="cd08646">
    <property type="entry name" value="FMT_core_Met-tRNA-FMT_N"/>
    <property type="match status" value="1"/>
</dbReference>
<dbReference type="CDD" id="cd08704">
    <property type="entry name" value="Met_tRNA_FMT_C"/>
    <property type="match status" value="1"/>
</dbReference>
<dbReference type="Gene3D" id="3.10.25.10">
    <property type="entry name" value="Formyl transferase, C-terminal domain"/>
    <property type="match status" value="1"/>
</dbReference>
<dbReference type="Gene3D" id="3.40.50.170">
    <property type="entry name" value="Formyl transferase, N-terminal domain"/>
    <property type="match status" value="1"/>
</dbReference>
<dbReference type="HAMAP" id="MF_00182">
    <property type="entry name" value="Formyl_trans"/>
    <property type="match status" value="1"/>
</dbReference>
<dbReference type="InterPro" id="IPR005794">
    <property type="entry name" value="Fmt"/>
</dbReference>
<dbReference type="InterPro" id="IPR005793">
    <property type="entry name" value="Formyl_trans_C"/>
</dbReference>
<dbReference type="InterPro" id="IPR037022">
    <property type="entry name" value="Formyl_trans_C_sf"/>
</dbReference>
<dbReference type="InterPro" id="IPR002376">
    <property type="entry name" value="Formyl_transf_N"/>
</dbReference>
<dbReference type="InterPro" id="IPR036477">
    <property type="entry name" value="Formyl_transf_N_sf"/>
</dbReference>
<dbReference type="InterPro" id="IPR011034">
    <property type="entry name" value="Formyl_transferase-like_C_sf"/>
</dbReference>
<dbReference type="InterPro" id="IPR044135">
    <property type="entry name" value="Met-tRNA-FMT_C"/>
</dbReference>
<dbReference type="InterPro" id="IPR041711">
    <property type="entry name" value="Met-tRNA-FMT_N"/>
</dbReference>
<dbReference type="NCBIfam" id="TIGR00460">
    <property type="entry name" value="fmt"/>
    <property type="match status" value="1"/>
</dbReference>
<dbReference type="PANTHER" id="PTHR11138">
    <property type="entry name" value="METHIONYL-TRNA FORMYLTRANSFERASE"/>
    <property type="match status" value="1"/>
</dbReference>
<dbReference type="PANTHER" id="PTHR11138:SF5">
    <property type="entry name" value="METHIONYL-TRNA FORMYLTRANSFERASE, MITOCHONDRIAL"/>
    <property type="match status" value="1"/>
</dbReference>
<dbReference type="Pfam" id="PF02911">
    <property type="entry name" value="Formyl_trans_C"/>
    <property type="match status" value="1"/>
</dbReference>
<dbReference type="Pfam" id="PF00551">
    <property type="entry name" value="Formyl_trans_N"/>
    <property type="match status" value="1"/>
</dbReference>
<dbReference type="SUPFAM" id="SSF50486">
    <property type="entry name" value="FMT C-terminal domain-like"/>
    <property type="match status" value="1"/>
</dbReference>
<dbReference type="SUPFAM" id="SSF53328">
    <property type="entry name" value="Formyltransferase"/>
    <property type="match status" value="1"/>
</dbReference>
<name>FMT_ACIB5</name>
<accession>B7I2C3</accession>
<evidence type="ECO:0000255" key="1">
    <source>
        <dbReference type="HAMAP-Rule" id="MF_00182"/>
    </source>
</evidence>
<organism>
    <name type="scientific">Acinetobacter baumannii (strain AB0057)</name>
    <dbReference type="NCBI Taxonomy" id="480119"/>
    <lineage>
        <taxon>Bacteria</taxon>
        <taxon>Pseudomonadati</taxon>
        <taxon>Pseudomonadota</taxon>
        <taxon>Gammaproteobacteria</taxon>
        <taxon>Moraxellales</taxon>
        <taxon>Moraxellaceae</taxon>
        <taxon>Acinetobacter</taxon>
        <taxon>Acinetobacter calcoaceticus/baumannii complex</taxon>
    </lineage>
</organism>
<proteinExistence type="inferred from homology"/>
<comment type="function">
    <text evidence="1">Attaches a formyl group to the free amino group of methionyl-tRNA(fMet). The formyl group appears to play a dual role in the initiator identity of N-formylmethionyl-tRNA by promoting its recognition by IF2 and preventing the misappropriation of this tRNA by the elongation apparatus.</text>
</comment>
<comment type="catalytic activity">
    <reaction evidence="1">
        <text>L-methionyl-tRNA(fMet) + (6R)-10-formyltetrahydrofolate = N-formyl-L-methionyl-tRNA(fMet) + (6S)-5,6,7,8-tetrahydrofolate + H(+)</text>
        <dbReference type="Rhea" id="RHEA:24380"/>
        <dbReference type="Rhea" id="RHEA-COMP:9952"/>
        <dbReference type="Rhea" id="RHEA-COMP:9953"/>
        <dbReference type="ChEBI" id="CHEBI:15378"/>
        <dbReference type="ChEBI" id="CHEBI:57453"/>
        <dbReference type="ChEBI" id="CHEBI:78530"/>
        <dbReference type="ChEBI" id="CHEBI:78844"/>
        <dbReference type="ChEBI" id="CHEBI:195366"/>
        <dbReference type="EC" id="2.1.2.9"/>
    </reaction>
</comment>
<comment type="similarity">
    <text evidence="1">Belongs to the Fmt family.</text>
</comment>
<keyword id="KW-0648">Protein biosynthesis</keyword>
<keyword id="KW-0808">Transferase</keyword>